<protein>
    <recommendedName>
        <fullName evidence="1">Pyrophosphatase PpaX</fullName>
        <ecNumber evidence="1">3.6.1.1</ecNumber>
    </recommendedName>
</protein>
<sequence>MTGKITTLLFDLDGTLINTNELIIKTFQVTLQEFLPDRVFTREDILPFIGPSLMETFREINPAHADEMRAFYREYNLKHHDDLILEYDGVYEAIRALYEEDYKLGIVSTKMYDTIMRGLKVTGLDKFFQVVIGLDQVSNAKPDPEGIEMALSLLNATKEEAIMIGDNYHDIEAGKNAETLTAGVAWAIKGPEHLAQFQPDFMLEKMSDLLAIVRDEE</sequence>
<reference key="1">
    <citation type="journal article" date="2011" name="J. Bacteriol.">
        <title>Genome sequence of lineage III Listeria monocytogenes strain HCC23.</title>
        <authorList>
            <person name="Steele C.L."/>
            <person name="Donaldson J.R."/>
            <person name="Paul D."/>
            <person name="Banes M.M."/>
            <person name="Arick T."/>
            <person name="Bridges S.M."/>
            <person name="Lawrence M.L."/>
        </authorList>
    </citation>
    <scope>NUCLEOTIDE SEQUENCE [LARGE SCALE GENOMIC DNA]</scope>
    <source>
        <strain>HCC23</strain>
    </source>
</reference>
<accession>B8DBN0</accession>
<keyword id="KW-0378">Hydrolase</keyword>
<keyword id="KW-0460">Magnesium</keyword>
<proteinExistence type="inferred from homology"/>
<name>PPAX_LISMH</name>
<evidence type="ECO:0000255" key="1">
    <source>
        <dbReference type="HAMAP-Rule" id="MF_01250"/>
    </source>
</evidence>
<gene>
    <name evidence="1" type="primary">ppaX</name>
    <name type="ordered locus">LMHCC_0119</name>
</gene>
<dbReference type="EC" id="3.6.1.1" evidence="1"/>
<dbReference type="EMBL" id="CP001175">
    <property type="protein sequence ID" value="ACK38481.1"/>
    <property type="molecule type" value="Genomic_DNA"/>
</dbReference>
<dbReference type="RefSeq" id="WP_003722613.1">
    <property type="nucleotide sequence ID" value="NC_011660.1"/>
</dbReference>
<dbReference type="SMR" id="B8DBN0"/>
<dbReference type="KEGG" id="lmh:LMHCC_0119"/>
<dbReference type="HOGENOM" id="CLU_045011_19_3_9"/>
<dbReference type="GO" id="GO:0005829">
    <property type="term" value="C:cytosol"/>
    <property type="evidence" value="ECO:0007669"/>
    <property type="project" value="TreeGrafter"/>
</dbReference>
<dbReference type="GO" id="GO:0004427">
    <property type="term" value="F:inorganic diphosphate phosphatase activity"/>
    <property type="evidence" value="ECO:0007669"/>
    <property type="project" value="UniProtKB-UniRule"/>
</dbReference>
<dbReference type="GO" id="GO:0000287">
    <property type="term" value="F:magnesium ion binding"/>
    <property type="evidence" value="ECO:0007669"/>
    <property type="project" value="UniProtKB-UniRule"/>
</dbReference>
<dbReference type="GO" id="GO:0008967">
    <property type="term" value="F:phosphoglycolate phosphatase activity"/>
    <property type="evidence" value="ECO:0007669"/>
    <property type="project" value="TreeGrafter"/>
</dbReference>
<dbReference type="GO" id="GO:0006281">
    <property type="term" value="P:DNA repair"/>
    <property type="evidence" value="ECO:0007669"/>
    <property type="project" value="TreeGrafter"/>
</dbReference>
<dbReference type="CDD" id="cd02616">
    <property type="entry name" value="HAD_PPase"/>
    <property type="match status" value="1"/>
</dbReference>
<dbReference type="FunFam" id="3.40.50.1000:FF:000022">
    <property type="entry name" value="Phosphoglycolate phosphatase"/>
    <property type="match status" value="1"/>
</dbReference>
<dbReference type="Gene3D" id="3.40.50.1000">
    <property type="entry name" value="HAD superfamily/HAD-like"/>
    <property type="match status" value="1"/>
</dbReference>
<dbReference type="Gene3D" id="1.10.150.240">
    <property type="entry name" value="Putative phosphatase, domain 2"/>
    <property type="match status" value="1"/>
</dbReference>
<dbReference type="HAMAP" id="MF_01250">
    <property type="entry name" value="Pyrophosphat_PpaX"/>
    <property type="match status" value="1"/>
</dbReference>
<dbReference type="InterPro" id="IPR050155">
    <property type="entry name" value="HAD-like_hydrolase_sf"/>
</dbReference>
<dbReference type="InterPro" id="IPR036412">
    <property type="entry name" value="HAD-like_sf"/>
</dbReference>
<dbReference type="InterPro" id="IPR006439">
    <property type="entry name" value="HAD-SF_hydro_IA"/>
</dbReference>
<dbReference type="InterPro" id="IPR041492">
    <property type="entry name" value="HAD_2"/>
</dbReference>
<dbReference type="InterPro" id="IPR023214">
    <property type="entry name" value="HAD_sf"/>
</dbReference>
<dbReference type="InterPro" id="IPR023198">
    <property type="entry name" value="PGP-like_dom2"/>
</dbReference>
<dbReference type="InterPro" id="IPR023733">
    <property type="entry name" value="Pyrophosphatase_Ppax"/>
</dbReference>
<dbReference type="NCBIfam" id="TIGR01549">
    <property type="entry name" value="HAD-SF-IA-v1"/>
    <property type="match status" value="1"/>
</dbReference>
<dbReference type="NCBIfam" id="NF009804">
    <property type="entry name" value="PRK13288.1"/>
    <property type="match status" value="1"/>
</dbReference>
<dbReference type="PANTHER" id="PTHR43434">
    <property type="entry name" value="PHOSPHOGLYCOLATE PHOSPHATASE"/>
    <property type="match status" value="1"/>
</dbReference>
<dbReference type="PANTHER" id="PTHR43434:SF26">
    <property type="entry name" value="PYROPHOSPHATASE PPAX"/>
    <property type="match status" value="1"/>
</dbReference>
<dbReference type="Pfam" id="PF13419">
    <property type="entry name" value="HAD_2"/>
    <property type="match status" value="1"/>
</dbReference>
<dbReference type="PRINTS" id="PR00413">
    <property type="entry name" value="HADHALOGNASE"/>
</dbReference>
<dbReference type="SFLD" id="SFLDG01135">
    <property type="entry name" value="C1.5.6:_HAD__Beta-PGM__Phospha"/>
    <property type="match status" value="1"/>
</dbReference>
<dbReference type="SFLD" id="SFLDS00003">
    <property type="entry name" value="Haloacid_Dehalogenase"/>
    <property type="match status" value="1"/>
</dbReference>
<dbReference type="SUPFAM" id="SSF56784">
    <property type="entry name" value="HAD-like"/>
    <property type="match status" value="1"/>
</dbReference>
<comment type="function">
    <text evidence="1">Hydrolyzes pyrophosphate formed during P-Ser-HPr dephosphorylation by HPrK/P. Might play a role in controlling the intracellular pyrophosphate pool.</text>
</comment>
<comment type="catalytic activity">
    <reaction evidence="1">
        <text>diphosphate + H2O = 2 phosphate + H(+)</text>
        <dbReference type="Rhea" id="RHEA:24576"/>
        <dbReference type="ChEBI" id="CHEBI:15377"/>
        <dbReference type="ChEBI" id="CHEBI:15378"/>
        <dbReference type="ChEBI" id="CHEBI:33019"/>
        <dbReference type="ChEBI" id="CHEBI:43474"/>
        <dbReference type="EC" id="3.6.1.1"/>
    </reaction>
</comment>
<comment type="cofactor">
    <cofactor evidence="1">
        <name>Mg(2+)</name>
        <dbReference type="ChEBI" id="CHEBI:18420"/>
    </cofactor>
</comment>
<comment type="similarity">
    <text evidence="1">Belongs to the HAD-like hydrolase superfamily. PpaX family.</text>
</comment>
<feature type="chain" id="PRO_1000165086" description="Pyrophosphatase PpaX">
    <location>
        <begin position="1"/>
        <end position="217"/>
    </location>
</feature>
<feature type="active site" description="Nucleophile" evidence="1">
    <location>
        <position position="11"/>
    </location>
</feature>
<organism>
    <name type="scientific">Listeria monocytogenes serotype 4a (strain HCC23)</name>
    <dbReference type="NCBI Taxonomy" id="552536"/>
    <lineage>
        <taxon>Bacteria</taxon>
        <taxon>Bacillati</taxon>
        <taxon>Bacillota</taxon>
        <taxon>Bacilli</taxon>
        <taxon>Bacillales</taxon>
        <taxon>Listeriaceae</taxon>
        <taxon>Listeria</taxon>
    </lineage>
</organism>